<feature type="signal peptide" evidence="2">
    <location>
        <begin position="1"/>
        <end position="18"/>
    </location>
</feature>
<feature type="propeptide" id="PRO_0000412405" evidence="1">
    <location>
        <begin position="19"/>
        <end position="87"/>
    </location>
</feature>
<feature type="chain" id="PRO_0000412406" description="Leucine aminopeptidase 1">
    <location>
        <begin position="88"/>
        <end position="401"/>
    </location>
</feature>
<feature type="binding site" evidence="1">
    <location>
        <position position="187"/>
    </location>
    <ligand>
        <name>Zn(2+)</name>
        <dbReference type="ChEBI" id="CHEBI:29105"/>
        <label>1</label>
    </ligand>
</feature>
<feature type="binding site" evidence="1">
    <location>
        <position position="206"/>
    </location>
    <ligand>
        <name>Zn(2+)</name>
        <dbReference type="ChEBI" id="CHEBI:29105"/>
        <label>1</label>
    </ligand>
</feature>
<feature type="binding site" evidence="1">
    <location>
        <position position="206"/>
    </location>
    <ligand>
        <name>Zn(2+)</name>
        <dbReference type="ChEBI" id="CHEBI:29105"/>
        <label>2</label>
        <note>catalytic</note>
    </ligand>
</feature>
<feature type="binding site" evidence="1">
    <location>
        <position position="245"/>
    </location>
    <ligand>
        <name>Zn(2+)</name>
        <dbReference type="ChEBI" id="CHEBI:29105"/>
        <label>2</label>
        <note>catalytic</note>
    </ligand>
</feature>
<feature type="binding site" evidence="1">
    <location>
        <position position="272"/>
    </location>
    <ligand>
        <name>Zn(2+)</name>
        <dbReference type="ChEBI" id="CHEBI:29105"/>
        <label>1</label>
    </ligand>
</feature>
<feature type="binding site" evidence="1">
    <location>
        <position position="354"/>
    </location>
    <ligand>
        <name>Zn(2+)</name>
        <dbReference type="ChEBI" id="CHEBI:29105"/>
        <label>2</label>
        <note>catalytic</note>
    </ligand>
</feature>
<feature type="glycosylation site" description="N-linked (GlcNAc...) asparagine" evidence="2">
    <location>
        <position position="179"/>
    </location>
</feature>
<feature type="disulfide bond" evidence="1">
    <location>
        <begin position="321"/>
        <end position="325"/>
    </location>
</feature>
<dbReference type="EC" id="3.4.11.-"/>
<dbReference type="EMBL" id="GG697368">
    <property type="protein sequence ID" value="EFQ33237.1"/>
    <property type="molecule type" value="Genomic_DNA"/>
</dbReference>
<dbReference type="RefSeq" id="XP_008097257.1">
    <property type="nucleotide sequence ID" value="XM_008099066.1"/>
</dbReference>
<dbReference type="SMR" id="E3QQU9"/>
<dbReference type="STRING" id="645133.E3QQU9"/>
<dbReference type="GlyCosmos" id="E3QQU9">
    <property type="glycosylation" value="1 site, No reported glycans"/>
</dbReference>
<dbReference type="EnsemblFungi" id="EFQ33237">
    <property type="protein sequence ID" value="EFQ33237"/>
    <property type="gene ID" value="GLRG_08381"/>
</dbReference>
<dbReference type="GeneID" id="24413746"/>
<dbReference type="VEuPathDB" id="FungiDB:GLRG_08381"/>
<dbReference type="eggNOG" id="KOG2195">
    <property type="taxonomic scope" value="Eukaryota"/>
</dbReference>
<dbReference type="HOGENOM" id="CLU_025866_0_0_1"/>
<dbReference type="OrthoDB" id="2214at2759"/>
<dbReference type="Proteomes" id="UP000008782">
    <property type="component" value="Unassembled WGS sequence"/>
</dbReference>
<dbReference type="GO" id="GO:0005576">
    <property type="term" value="C:extracellular region"/>
    <property type="evidence" value="ECO:0007669"/>
    <property type="project" value="UniProtKB-SubCell"/>
</dbReference>
<dbReference type="GO" id="GO:0004177">
    <property type="term" value="F:aminopeptidase activity"/>
    <property type="evidence" value="ECO:0007669"/>
    <property type="project" value="UniProtKB-KW"/>
</dbReference>
<dbReference type="GO" id="GO:0046872">
    <property type="term" value="F:metal ion binding"/>
    <property type="evidence" value="ECO:0007669"/>
    <property type="project" value="UniProtKB-KW"/>
</dbReference>
<dbReference type="GO" id="GO:0008235">
    <property type="term" value="F:metalloexopeptidase activity"/>
    <property type="evidence" value="ECO:0007669"/>
    <property type="project" value="InterPro"/>
</dbReference>
<dbReference type="GO" id="GO:0006508">
    <property type="term" value="P:proteolysis"/>
    <property type="evidence" value="ECO:0007669"/>
    <property type="project" value="UniProtKB-KW"/>
</dbReference>
<dbReference type="CDD" id="cd03879">
    <property type="entry name" value="M28_AAP"/>
    <property type="match status" value="1"/>
</dbReference>
<dbReference type="FunFam" id="3.40.630.10:FF:000042">
    <property type="entry name" value="Peptide hydrolase"/>
    <property type="match status" value="1"/>
</dbReference>
<dbReference type="Gene3D" id="3.40.630.10">
    <property type="entry name" value="Zn peptidases"/>
    <property type="match status" value="1"/>
</dbReference>
<dbReference type="InterPro" id="IPR045175">
    <property type="entry name" value="M28_fam"/>
</dbReference>
<dbReference type="InterPro" id="IPR007484">
    <property type="entry name" value="Peptidase_M28"/>
</dbReference>
<dbReference type="PANTHER" id="PTHR12147:SF56">
    <property type="entry name" value="AMINOPEPTIDASE YDR415C-RELATED"/>
    <property type="match status" value="1"/>
</dbReference>
<dbReference type="PANTHER" id="PTHR12147">
    <property type="entry name" value="METALLOPEPTIDASE M28 FAMILY MEMBER"/>
    <property type="match status" value="1"/>
</dbReference>
<dbReference type="Pfam" id="PF04389">
    <property type="entry name" value="Peptidase_M28"/>
    <property type="match status" value="1"/>
</dbReference>
<dbReference type="SUPFAM" id="SSF53187">
    <property type="entry name" value="Zn-dependent exopeptidases"/>
    <property type="match status" value="1"/>
</dbReference>
<sequence length="401" mass="44812">MKVAKASLLTILAHSVSARFLAEDEINRVQLYPAGSEPEKYLIELAPGDTRWVTEEEKWELRRNGNRFFDITDHKDLGATRLRTKTKSVFPEKCSLQDKVKPLLKDLDKSEIQKNLEKFTSFHTRYYKSDYGRQSSEWLLAKIDSIIKDAGADKNVYAQPFPHTWQQSSIIVTIPGKSNSTVIIGAHQDSINLWLPSILAAPGADDDGSGSMTILEAFRTLLKSKDIVSGKADNTIEFHWYSAEEGGLLGSQAIFSSYEKEGRDIKAMLQQDMTGFVQRTLDAGQPESVGVITDFVDPGLTGFIKKVIVEYCKVPYVETKCGYACSDHASASKAGYPSAFVIESAFEYSDNHIHSVDDTIKYLSFDHMLEHAKMTLGLVYELGFTDFTALEKKGESVSEEL</sequence>
<name>LAP1_COLGM</name>
<keyword id="KW-0031">Aminopeptidase</keyword>
<keyword id="KW-1015">Disulfide bond</keyword>
<keyword id="KW-0325">Glycoprotein</keyword>
<keyword id="KW-0378">Hydrolase</keyword>
<keyword id="KW-0479">Metal-binding</keyword>
<keyword id="KW-0645">Protease</keyword>
<keyword id="KW-1185">Reference proteome</keyword>
<keyword id="KW-0964">Secreted</keyword>
<keyword id="KW-0732">Signal</keyword>
<keyword id="KW-0862">Zinc</keyword>
<keyword id="KW-0865">Zymogen</keyword>
<accession>E3QQU9</accession>
<protein>
    <recommendedName>
        <fullName>Leucine aminopeptidase 1</fullName>
        <ecNumber>3.4.11.-</ecNumber>
    </recommendedName>
    <alternativeName>
        <fullName>Leucyl aminopeptidase 1</fullName>
        <shortName>LAP1</shortName>
    </alternativeName>
</protein>
<evidence type="ECO:0000250" key="1"/>
<evidence type="ECO:0000255" key="2"/>
<evidence type="ECO:0000305" key="3"/>
<proteinExistence type="inferred from homology"/>
<comment type="function">
    <text evidence="1">Extracellular aminopeptidase that allows assimilation of proteinaceous substrates.</text>
</comment>
<comment type="cofactor">
    <cofactor evidence="1">
        <name>Zn(2+)</name>
        <dbReference type="ChEBI" id="CHEBI:29105"/>
    </cofactor>
    <text evidence="1">Binds 2 Zn(2+) ions per subunit.</text>
</comment>
<comment type="subunit">
    <text evidence="1">Monomer.</text>
</comment>
<comment type="subcellular location">
    <subcellularLocation>
        <location evidence="1">Secreted</location>
    </subcellularLocation>
</comment>
<comment type="similarity">
    <text evidence="3">Belongs to the peptidase M28 family. M28E subfamily.</text>
</comment>
<gene>
    <name type="primary">LAP1</name>
    <name type="ORF">GLRG_08381</name>
</gene>
<reference key="1">
    <citation type="journal article" date="2012" name="Nat. Genet.">
        <title>Lifestyle transitions in plant pathogenic Colletotrichum fungi deciphered by genome and transcriptome analyses.</title>
        <authorList>
            <person name="O'Connell R.J."/>
            <person name="Thon M.R."/>
            <person name="Hacquard S."/>
            <person name="Amyotte S.G."/>
            <person name="Kleemann J."/>
            <person name="Torres M.F."/>
            <person name="Damm U."/>
            <person name="Buiate E.A."/>
            <person name="Epstein L."/>
            <person name="Alkan N."/>
            <person name="Altmueller J."/>
            <person name="Alvarado-Balderrama L."/>
            <person name="Bauser C.A."/>
            <person name="Becker C."/>
            <person name="Birren B.W."/>
            <person name="Chen Z."/>
            <person name="Choi J."/>
            <person name="Crouch J.A."/>
            <person name="Duvick J.P."/>
            <person name="Farman M.A."/>
            <person name="Gan P."/>
            <person name="Heiman D."/>
            <person name="Henrissat B."/>
            <person name="Howard R.J."/>
            <person name="Kabbage M."/>
            <person name="Koch C."/>
            <person name="Kracher B."/>
            <person name="Kubo Y."/>
            <person name="Law A.D."/>
            <person name="Lebrun M.-H."/>
            <person name="Lee Y.-H."/>
            <person name="Miyara I."/>
            <person name="Moore N."/>
            <person name="Neumann U."/>
            <person name="Nordstroem K."/>
            <person name="Panaccione D.G."/>
            <person name="Panstruga R."/>
            <person name="Place M."/>
            <person name="Proctor R.H."/>
            <person name="Prusky D."/>
            <person name="Rech G."/>
            <person name="Reinhardt R."/>
            <person name="Rollins J.A."/>
            <person name="Rounsley S."/>
            <person name="Schardl C.L."/>
            <person name="Schwartz D.C."/>
            <person name="Shenoy N."/>
            <person name="Shirasu K."/>
            <person name="Sikhakolli U.R."/>
            <person name="Stueber K."/>
            <person name="Sukno S.A."/>
            <person name="Sweigard J.A."/>
            <person name="Takano Y."/>
            <person name="Takahara H."/>
            <person name="Trail F."/>
            <person name="van der Does H.C."/>
            <person name="Voll L.M."/>
            <person name="Will I."/>
            <person name="Young S."/>
            <person name="Zeng Q."/>
            <person name="Zhang J."/>
            <person name="Zhou S."/>
            <person name="Dickman M.B."/>
            <person name="Schulze-Lefert P."/>
            <person name="Ver Loren van Themaat E."/>
            <person name="Ma L.-J."/>
            <person name="Vaillancourt L.J."/>
        </authorList>
    </citation>
    <scope>NUCLEOTIDE SEQUENCE [LARGE SCALE GENOMIC DNA]</scope>
    <source>
        <strain>M1.001 / M2 / FGSC 10212</strain>
    </source>
</reference>
<organism>
    <name type="scientific">Colletotrichum graminicola (strain M1.001 / M2 / FGSC 10212)</name>
    <name type="common">Maize anthracnose fungus</name>
    <name type="synonym">Glomerella graminicola</name>
    <dbReference type="NCBI Taxonomy" id="645133"/>
    <lineage>
        <taxon>Eukaryota</taxon>
        <taxon>Fungi</taxon>
        <taxon>Dikarya</taxon>
        <taxon>Ascomycota</taxon>
        <taxon>Pezizomycotina</taxon>
        <taxon>Sordariomycetes</taxon>
        <taxon>Hypocreomycetidae</taxon>
        <taxon>Glomerellales</taxon>
        <taxon>Glomerellaceae</taxon>
        <taxon>Colletotrichum</taxon>
        <taxon>Colletotrichum graminicola species complex</taxon>
    </lineage>
</organism>